<keyword id="KW-0150">Chloroplast</keyword>
<keyword id="KW-0249">Electron transport</keyword>
<keyword id="KW-0349">Heme</keyword>
<keyword id="KW-0408">Iron</keyword>
<keyword id="KW-0472">Membrane</keyword>
<keyword id="KW-0479">Metal-binding</keyword>
<keyword id="KW-0602">Photosynthesis</keyword>
<keyword id="KW-0604">Photosystem II</keyword>
<keyword id="KW-0934">Plastid</keyword>
<keyword id="KW-1185">Reference proteome</keyword>
<keyword id="KW-0793">Thylakoid</keyword>
<keyword id="KW-0812">Transmembrane</keyword>
<keyword id="KW-1133">Transmembrane helix</keyword>
<keyword id="KW-0813">Transport</keyword>
<gene>
    <name evidence="1" type="primary">psbE</name>
</gene>
<comment type="function">
    <text evidence="1">This b-type cytochrome is tightly associated with the reaction center of photosystem II (PSII). PSII is a light-driven water:plastoquinone oxidoreductase that uses light energy to abstract electrons from H(2)O, generating O(2) and a proton gradient subsequently used for ATP formation. It consists of a core antenna complex that captures photons, and an electron transfer chain that converts photonic excitation into a charge separation.</text>
</comment>
<comment type="cofactor">
    <cofactor evidence="1">
        <name>heme b</name>
        <dbReference type="ChEBI" id="CHEBI:60344"/>
    </cofactor>
    <text evidence="1">With its partner (PsbF) binds heme. PSII binds additional chlorophylls, carotenoids and specific lipids.</text>
</comment>
<comment type="subunit">
    <text evidence="1">Heterodimer of an alpha subunit and a beta subunit. PSII is composed of 1 copy each of membrane proteins PsbA, PsbB, PsbC, PsbD, PsbE, PsbF, PsbH, PsbI, PsbJ, PsbK, PsbL, PsbM, PsbT, PsbX, PsbY, PsbZ, Psb30/Ycf12, at least 3 peripheral proteins of the oxygen-evolving complex and a large number of cofactors. It forms dimeric complexes.</text>
</comment>
<comment type="subcellular location">
    <subcellularLocation>
        <location evidence="1">Plastid</location>
        <location evidence="1">Chloroplast thylakoid membrane</location>
        <topology evidence="1">Single-pass membrane protein</topology>
    </subcellularLocation>
</comment>
<comment type="similarity">
    <text evidence="1">Belongs to the PsbE/PsbF family.</text>
</comment>
<name>PSBE_PHATC</name>
<feature type="chain" id="PRO_0000275722" description="Cytochrome b559 subunit alpha">
    <location>
        <begin position="1"/>
        <end position="84"/>
    </location>
</feature>
<feature type="transmembrane region" description="Helical" evidence="1">
    <location>
        <begin position="22"/>
        <end position="36"/>
    </location>
</feature>
<feature type="binding site" description="axial binding residue" evidence="1">
    <location>
        <position position="24"/>
    </location>
    <ligand>
        <name>heme</name>
        <dbReference type="ChEBI" id="CHEBI:30413"/>
        <note>ligand shared with beta subunit</note>
    </ligand>
    <ligandPart>
        <name>Fe</name>
        <dbReference type="ChEBI" id="CHEBI:18248"/>
    </ligandPart>
</feature>
<protein>
    <recommendedName>
        <fullName evidence="1">Cytochrome b559 subunit alpha</fullName>
    </recommendedName>
    <alternativeName>
        <fullName evidence="1">PSII reaction center subunit V</fullName>
    </alternativeName>
</protein>
<geneLocation type="chloroplast"/>
<reference key="1">
    <citation type="journal article" date="2007" name="Mol. Genet. Genomics">
        <title>Chloroplast genomes of the diatoms Phaeodactylum tricornutum and Thalassiosira pseudonana: comparison with other plastid genomes of the red lineage.</title>
        <authorList>
            <person name="Oudot-Le Secq M.-P."/>
            <person name="Grimwood J."/>
            <person name="Shapiro H."/>
            <person name="Armbrust E.V."/>
            <person name="Bowler C."/>
            <person name="Green B.R."/>
        </authorList>
    </citation>
    <scope>NUCLEOTIDE SEQUENCE [LARGE SCALE GENOMIC DNA]</scope>
    <source>
        <strain>CCAP 1055/1</strain>
    </source>
</reference>
<organism>
    <name type="scientific">Phaeodactylum tricornutum (strain CCAP 1055/1)</name>
    <dbReference type="NCBI Taxonomy" id="556484"/>
    <lineage>
        <taxon>Eukaryota</taxon>
        <taxon>Sar</taxon>
        <taxon>Stramenopiles</taxon>
        <taxon>Ochrophyta</taxon>
        <taxon>Bacillariophyta</taxon>
        <taxon>Bacillariophyceae</taxon>
        <taxon>Bacillariophycidae</taxon>
        <taxon>Naviculales</taxon>
        <taxon>Phaeodactylaceae</taxon>
        <taxon>Phaeodactylum</taxon>
    </lineage>
</organism>
<accession>A0T0A3</accession>
<sequence>MSGGSTGERPFSDIITSVRYWIIHSITIPSLFVSGWLFVSTGLAYDVFGTPRPNEYFTQDRQQIPLVNDRFSAKQELEDLTKGL</sequence>
<proteinExistence type="inferred from homology"/>
<evidence type="ECO:0000255" key="1">
    <source>
        <dbReference type="HAMAP-Rule" id="MF_00642"/>
    </source>
</evidence>
<dbReference type="EMBL" id="EF067920">
    <property type="protein sequence ID" value="ABK20592.1"/>
    <property type="molecule type" value="Genomic_DNA"/>
</dbReference>
<dbReference type="RefSeq" id="YP_874369.1">
    <property type="nucleotide sequence ID" value="NC_008588.1"/>
</dbReference>
<dbReference type="SMR" id="A0T0A3"/>
<dbReference type="STRING" id="556484.A0T0A3"/>
<dbReference type="GeneID" id="4524572"/>
<dbReference type="InParanoid" id="A0T0A3"/>
<dbReference type="Proteomes" id="UP000000759">
    <property type="component" value="Chloroplast"/>
</dbReference>
<dbReference type="GO" id="GO:0009535">
    <property type="term" value="C:chloroplast thylakoid membrane"/>
    <property type="evidence" value="ECO:0007669"/>
    <property type="project" value="UniProtKB-SubCell"/>
</dbReference>
<dbReference type="GO" id="GO:0009539">
    <property type="term" value="C:photosystem II reaction center"/>
    <property type="evidence" value="ECO:0007669"/>
    <property type="project" value="InterPro"/>
</dbReference>
<dbReference type="GO" id="GO:0009055">
    <property type="term" value="F:electron transfer activity"/>
    <property type="evidence" value="ECO:0007669"/>
    <property type="project" value="UniProtKB-UniRule"/>
</dbReference>
<dbReference type="GO" id="GO:0020037">
    <property type="term" value="F:heme binding"/>
    <property type="evidence" value="ECO:0007669"/>
    <property type="project" value="InterPro"/>
</dbReference>
<dbReference type="GO" id="GO:0005506">
    <property type="term" value="F:iron ion binding"/>
    <property type="evidence" value="ECO:0007669"/>
    <property type="project" value="UniProtKB-UniRule"/>
</dbReference>
<dbReference type="GO" id="GO:0009767">
    <property type="term" value="P:photosynthetic electron transport chain"/>
    <property type="evidence" value="ECO:0007669"/>
    <property type="project" value="InterPro"/>
</dbReference>
<dbReference type="Gene3D" id="1.20.5.860">
    <property type="entry name" value="Photosystem II cytochrome b559, alpha subunit"/>
    <property type="match status" value="1"/>
</dbReference>
<dbReference type="HAMAP" id="MF_00642">
    <property type="entry name" value="PSII_PsbE"/>
    <property type="match status" value="1"/>
</dbReference>
<dbReference type="InterPro" id="IPR006217">
    <property type="entry name" value="PSII_cyt_b559_asu"/>
</dbReference>
<dbReference type="InterPro" id="IPR037025">
    <property type="entry name" value="PSII_cyt_b559_asu_sf"/>
</dbReference>
<dbReference type="InterPro" id="IPR006216">
    <property type="entry name" value="PSII_cyt_b559_CS"/>
</dbReference>
<dbReference type="InterPro" id="IPR013081">
    <property type="entry name" value="PSII_cyt_b559_N"/>
</dbReference>
<dbReference type="InterPro" id="IPR013082">
    <property type="entry name" value="PSII_cytb559_asu_lum"/>
</dbReference>
<dbReference type="NCBIfam" id="TIGR01332">
    <property type="entry name" value="cyt_b559_alpha"/>
    <property type="match status" value="1"/>
</dbReference>
<dbReference type="PANTHER" id="PTHR33391">
    <property type="entry name" value="CYTOCHROME B559 SUBUNIT BETA-RELATED"/>
    <property type="match status" value="1"/>
</dbReference>
<dbReference type="PANTHER" id="PTHR33391:SF9">
    <property type="entry name" value="CYTOCHROME B559 SUBUNIT BETA-RELATED"/>
    <property type="match status" value="1"/>
</dbReference>
<dbReference type="Pfam" id="PF00283">
    <property type="entry name" value="Cytochrom_B559"/>
    <property type="match status" value="1"/>
</dbReference>
<dbReference type="Pfam" id="PF00284">
    <property type="entry name" value="Cytochrom_B559a"/>
    <property type="match status" value="1"/>
</dbReference>
<dbReference type="PIRSF" id="PIRSF000036">
    <property type="entry name" value="PsbE"/>
    <property type="match status" value="1"/>
</dbReference>
<dbReference type="SUPFAM" id="SSF161045">
    <property type="entry name" value="Cytochrome b559 subunits"/>
    <property type="match status" value="1"/>
</dbReference>
<dbReference type="PROSITE" id="PS00537">
    <property type="entry name" value="CYTOCHROME_B559"/>
    <property type="match status" value="1"/>
</dbReference>